<proteinExistence type="evidence at protein level"/>
<protein>
    <recommendedName>
        <fullName evidence="4">Pyrokinin-2</fullName>
        <shortName evidence="4">PK-2</shortName>
    </recommendedName>
    <alternativeName>
        <fullName evidence="1">FXPRL-amide</fullName>
    </alternativeName>
</protein>
<organism>
    <name type="scientific">Pachyphasma brandbergense</name>
    <name type="common">Gladiator</name>
    <name type="synonym">Heel-walker</name>
    <dbReference type="NCBI Taxonomy" id="1041430"/>
    <lineage>
        <taxon>Eukaryota</taxon>
        <taxon>Metazoa</taxon>
        <taxon>Ecdysozoa</taxon>
        <taxon>Arthropoda</taxon>
        <taxon>Hexapoda</taxon>
        <taxon>Insecta</taxon>
        <taxon>Pterygota</taxon>
        <taxon>Neoptera</taxon>
        <taxon>Polyneoptera</taxon>
        <taxon>Mantophasmatodea</taxon>
        <taxon>Mantophasmatidae</taxon>
        <taxon>Pachyphasma</taxon>
    </lineage>
</organism>
<name>PPK2_PACBA</name>
<feature type="peptide" id="PRO_0000421589" description="Pyrokinin-2" evidence="3">
    <location>
        <begin position="1"/>
        <end position="8"/>
    </location>
</feature>
<feature type="modified residue" description="Leucine amide" evidence="3">
    <location>
        <position position="8"/>
    </location>
</feature>
<evidence type="ECO:0000250" key="1">
    <source>
        <dbReference type="UniProtKB" id="P82619"/>
    </source>
</evidence>
<evidence type="ECO:0000255" key="2"/>
<evidence type="ECO:0000269" key="3">
    <source>
    </source>
</evidence>
<evidence type="ECO:0000303" key="4">
    <source>
    </source>
</evidence>
<evidence type="ECO:0000305" key="5"/>
<evidence type="ECO:0000305" key="6">
    <source>
    </source>
</evidence>
<comment type="function">
    <text evidence="1">Myoactive.</text>
</comment>
<comment type="subcellular location">
    <subcellularLocation>
        <location evidence="6">Secreted</location>
    </subcellularLocation>
</comment>
<comment type="similarity">
    <text evidence="2">Belongs to the pyrokinin family.</text>
</comment>
<accession>B3A0K6</accession>
<reference evidence="5" key="1">
    <citation type="journal article" date="2012" name="Syst. Biol.">
        <title>Peptidomics-based phylogeny and biogeography of Mantophasmatodea (Hexapoda).</title>
        <authorList>
            <person name="Predel R."/>
            <person name="Neupert S."/>
            <person name="Huetteroth W."/>
            <person name="Kahnt J."/>
            <person name="Waidelich D."/>
            <person name="Roth S."/>
        </authorList>
    </citation>
    <scope>PROTEIN SEQUENCE</scope>
    <scope>AMIDATION AT LEU-8</scope>
    <source>
        <tissue evidence="3">Corpora cardiaca</tissue>
    </source>
</reference>
<dbReference type="GO" id="GO:0005576">
    <property type="term" value="C:extracellular region"/>
    <property type="evidence" value="ECO:0007669"/>
    <property type="project" value="UniProtKB-SubCell"/>
</dbReference>
<dbReference type="GO" id="GO:0007218">
    <property type="term" value="P:neuropeptide signaling pathway"/>
    <property type="evidence" value="ECO:0007669"/>
    <property type="project" value="UniProtKB-KW"/>
</dbReference>
<sequence>SPPFAPRL</sequence>
<keyword id="KW-0027">Amidation</keyword>
<keyword id="KW-0903">Direct protein sequencing</keyword>
<keyword id="KW-0527">Neuropeptide</keyword>
<keyword id="KW-0964">Secreted</keyword>